<dbReference type="EC" id="1.3.1.98" evidence="1"/>
<dbReference type="EMBL" id="CP000936">
    <property type="protein sequence ID" value="ACA35854.1"/>
    <property type="molecule type" value="Genomic_DNA"/>
</dbReference>
<dbReference type="RefSeq" id="WP_000116180.1">
    <property type="nucleotide sequence ID" value="NC_010380.1"/>
</dbReference>
<dbReference type="SMR" id="B1ICI9"/>
<dbReference type="KEGG" id="spv:SPH_1520"/>
<dbReference type="HOGENOM" id="CLU_035304_1_1_9"/>
<dbReference type="UniPathway" id="UPA00219"/>
<dbReference type="Proteomes" id="UP000002163">
    <property type="component" value="Chromosome"/>
</dbReference>
<dbReference type="GO" id="GO:0005829">
    <property type="term" value="C:cytosol"/>
    <property type="evidence" value="ECO:0007669"/>
    <property type="project" value="TreeGrafter"/>
</dbReference>
<dbReference type="GO" id="GO:0071949">
    <property type="term" value="F:FAD binding"/>
    <property type="evidence" value="ECO:0007669"/>
    <property type="project" value="InterPro"/>
</dbReference>
<dbReference type="GO" id="GO:0008762">
    <property type="term" value="F:UDP-N-acetylmuramate dehydrogenase activity"/>
    <property type="evidence" value="ECO:0007669"/>
    <property type="project" value="UniProtKB-UniRule"/>
</dbReference>
<dbReference type="GO" id="GO:0051301">
    <property type="term" value="P:cell division"/>
    <property type="evidence" value="ECO:0007669"/>
    <property type="project" value="UniProtKB-KW"/>
</dbReference>
<dbReference type="GO" id="GO:0071555">
    <property type="term" value="P:cell wall organization"/>
    <property type="evidence" value="ECO:0007669"/>
    <property type="project" value="UniProtKB-KW"/>
</dbReference>
<dbReference type="GO" id="GO:0009252">
    <property type="term" value="P:peptidoglycan biosynthetic process"/>
    <property type="evidence" value="ECO:0007669"/>
    <property type="project" value="UniProtKB-UniRule"/>
</dbReference>
<dbReference type="GO" id="GO:0008360">
    <property type="term" value="P:regulation of cell shape"/>
    <property type="evidence" value="ECO:0007669"/>
    <property type="project" value="UniProtKB-KW"/>
</dbReference>
<dbReference type="Gene3D" id="3.30.465.10">
    <property type="match status" value="1"/>
</dbReference>
<dbReference type="Gene3D" id="3.90.78.10">
    <property type="entry name" value="UDP-N-acetylenolpyruvoylglucosamine reductase, C-terminal domain"/>
    <property type="match status" value="1"/>
</dbReference>
<dbReference type="Gene3D" id="3.30.43.10">
    <property type="entry name" value="Uridine Diphospho-n-acetylenolpyruvylglucosamine Reductase, domain 2"/>
    <property type="match status" value="1"/>
</dbReference>
<dbReference type="HAMAP" id="MF_00037">
    <property type="entry name" value="MurB"/>
    <property type="match status" value="1"/>
</dbReference>
<dbReference type="InterPro" id="IPR016166">
    <property type="entry name" value="FAD-bd_PCMH"/>
</dbReference>
<dbReference type="InterPro" id="IPR036318">
    <property type="entry name" value="FAD-bd_PCMH-like_sf"/>
</dbReference>
<dbReference type="InterPro" id="IPR016167">
    <property type="entry name" value="FAD-bd_PCMH_sub1"/>
</dbReference>
<dbReference type="InterPro" id="IPR016169">
    <property type="entry name" value="FAD-bd_PCMH_sub2"/>
</dbReference>
<dbReference type="InterPro" id="IPR003170">
    <property type="entry name" value="MurB"/>
</dbReference>
<dbReference type="InterPro" id="IPR011601">
    <property type="entry name" value="MurB_C"/>
</dbReference>
<dbReference type="InterPro" id="IPR036635">
    <property type="entry name" value="MurB_C_sf"/>
</dbReference>
<dbReference type="InterPro" id="IPR006094">
    <property type="entry name" value="Oxid_FAD_bind_N"/>
</dbReference>
<dbReference type="NCBIfam" id="TIGR00179">
    <property type="entry name" value="murB"/>
    <property type="match status" value="1"/>
</dbReference>
<dbReference type="NCBIfam" id="NF010480">
    <property type="entry name" value="PRK13905.1"/>
    <property type="match status" value="1"/>
</dbReference>
<dbReference type="PANTHER" id="PTHR21071">
    <property type="entry name" value="UDP-N-ACETYLENOLPYRUVOYLGLUCOSAMINE REDUCTASE"/>
    <property type="match status" value="1"/>
</dbReference>
<dbReference type="PANTHER" id="PTHR21071:SF4">
    <property type="entry name" value="UDP-N-ACETYLENOLPYRUVOYLGLUCOSAMINE REDUCTASE"/>
    <property type="match status" value="1"/>
</dbReference>
<dbReference type="Pfam" id="PF01565">
    <property type="entry name" value="FAD_binding_4"/>
    <property type="match status" value="1"/>
</dbReference>
<dbReference type="Pfam" id="PF02873">
    <property type="entry name" value="MurB_C"/>
    <property type="match status" value="1"/>
</dbReference>
<dbReference type="SUPFAM" id="SSF56176">
    <property type="entry name" value="FAD-binding/transporter-associated domain-like"/>
    <property type="match status" value="1"/>
</dbReference>
<dbReference type="SUPFAM" id="SSF56194">
    <property type="entry name" value="Uridine diphospho-N-Acetylenolpyruvylglucosamine reductase, MurB, C-terminal domain"/>
    <property type="match status" value="1"/>
</dbReference>
<dbReference type="PROSITE" id="PS51387">
    <property type="entry name" value="FAD_PCMH"/>
    <property type="match status" value="1"/>
</dbReference>
<reference key="1">
    <citation type="journal article" date="2010" name="Genome Biol.">
        <title>Structure and dynamics of the pan-genome of Streptococcus pneumoniae and closely related species.</title>
        <authorList>
            <person name="Donati C."/>
            <person name="Hiller N.L."/>
            <person name="Tettelin H."/>
            <person name="Muzzi A."/>
            <person name="Croucher N.J."/>
            <person name="Angiuoli S.V."/>
            <person name="Oggioni M."/>
            <person name="Dunning Hotopp J.C."/>
            <person name="Hu F.Z."/>
            <person name="Riley D.R."/>
            <person name="Covacci A."/>
            <person name="Mitchell T.J."/>
            <person name="Bentley S.D."/>
            <person name="Kilian M."/>
            <person name="Ehrlich G.D."/>
            <person name="Rappuoli R."/>
            <person name="Moxon E.R."/>
            <person name="Masignani V."/>
        </authorList>
    </citation>
    <scope>NUCLEOTIDE SEQUENCE [LARGE SCALE GENOMIC DNA]</scope>
    <source>
        <strain>Hungary19A-6</strain>
    </source>
</reference>
<proteinExistence type="inferred from homology"/>
<accession>B1ICI9</accession>
<sequence>MSVREKMLEILEGIDIRFKEPLHSYSYTKVGGEADYLVFPRNRFELARVVKFANQENIPWMVLGNASNIIVRDGGIRGFVILCDKLNNVSVDGYTIEAEAGANLIETTRIALRHSLTGFEFACGIPGSVGGAVFMNAGAYGGEIAHILQSCKVLTKDGEIETLSAKDLAFGYRHSAIQESGAVVLSVKFALAPGTHQVIKQEMDRLTHLRELKQPLEYPSCGSVFKRPVGHFAGQLISEAGLKGYRIGGVEVSEKHAGFMINVADGTAKDYEDLIQSVIEKVKEHSGITLEREVRILGESK</sequence>
<protein>
    <recommendedName>
        <fullName evidence="1">UDP-N-acetylenolpyruvoylglucosamine reductase</fullName>
        <ecNumber evidence="1">1.3.1.98</ecNumber>
    </recommendedName>
    <alternativeName>
        <fullName evidence="1">UDP-N-acetylmuramate dehydrogenase</fullName>
    </alternativeName>
</protein>
<organism>
    <name type="scientific">Streptococcus pneumoniae (strain Hungary19A-6)</name>
    <dbReference type="NCBI Taxonomy" id="487214"/>
    <lineage>
        <taxon>Bacteria</taxon>
        <taxon>Bacillati</taxon>
        <taxon>Bacillota</taxon>
        <taxon>Bacilli</taxon>
        <taxon>Lactobacillales</taxon>
        <taxon>Streptococcaceae</taxon>
        <taxon>Streptococcus</taxon>
    </lineage>
</organism>
<evidence type="ECO:0000255" key="1">
    <source>
        <dbReference type="HAMAP-Rule" id="MF_00037"/>
    </source>
</evidence>
<comment type="function">
    <text evidence="1">Cell wall formation.</text>
</comment>
<comment type="catalytic activity">
    <reaction evidence="1">
        <text>UDP-N-acetyl-alpha-D-muramate + NADP(+) = UDP-N-acetyl-3-O-(1-carboxyvinyl)-alpha-D-glucosamine + NADPH + H(+)</text>
        <dbReference type="Rhea" id="RHEA:12248"/>
        <dbReference type="ChEBI" id="CHEBI:15378"/>
        <dbReference type="ChEBI" id="CHEBI:57783"/>
        <dbReference type="ChEBI" id="CHEBI:58349"/>
        <dbReference type="ChEBI" id="CHEBI:68483"/>
        <dbReference type="ChEBI" id="CHEBI:70757"/>
        <dbReference type="EC" id="1.3.1.98"/>
    </reaction>
</comment>
<comment type="cofactor">
    <cofactor evidence="1">
        <name>FAD</name>
        <dbReference type="ChEBI" id="CHEBI:57692"/>
    </cofactor>
</comment>
<comment type="pathway">
    <text evidence="1">Cell wall biogenesis; peptidoglycan biosynthesis.</text>
</comment>
<comment type="subcellular location">
    <subcellularLocation>
        <location evidence="1">Cytoplasm</location>
    </subcellularLocation>
</comment>
<comment type="similarity">
    <text evidence="1">Belongs to the MurB family.</text>
</comment>
<gene>
    <name evidence="1" type="primary">murB</name>
    <name type="ordered locus">SPH_1520</name>
</gene>
<feature type="chain" id="PRO_1000117140" description="UDP-N-acetylenolpyruvoylglucosamine reductase">
    <location>
        <begin position="1"/>
        <end position="301"/>
    </location>
</feature>
<feature type="domain" description="FAD-binding PCMH-type" evidence="1">
    <location>
        <begin position="30"/>
        <end position="194"/>
    </location>
</feature>
<feature type="active site" evidence="1">
    <location>
        <position position="173"/>
    </location>
</feature>
<feature type="active site" description="Proton donor" evidence="1">
    <location>
        <position position="223"/>
    </location>
</feature>
<feature type="active site" evidence="1">
    <location>
        <position position="293"/>
    </location>
</feature>
<name>MURB_STRPI</name>
<keyword id="KW-0131">Cell cycle</keyword>
<keyword id="KW-0132">Cell division</keyword>
<keyword id="KW-0133">Cell shape</keyword>
<keyword id="KW-0961">Cell wall biogenesis/degradation</keyword>
<keyword id="KW-0963">Cytoplasm</keyword>
<keyword id="KW-0274">FAD</keyword>
<keyword id="KW-0285">Flavoprotein</keyword>
<keyword id="KW-0521">NADP</keyword>
<keyword id="KW-0560">Oxidoreductase</keyword>
<keyword id="KW-0573">Peptidoglycan synthesis</keyword>